<name>SRG13_CAEEL</name>
<accession>P46567</accession>
<comment type="subcellular location">
    <subcellularLocation>
        <location evidence="2">Membrane</location>
        <topology evidence="2">Multi-pass membrane protein</topology>
    </subcellularLocation>
</comment>
<comment type="similarity">
    <text evidence="2">Belongs to the nematode receptor-like protein srg family.</text>
</comment>
<sequence>MSTQFSLSSNISYDDPISFECDTSYDSGLELLKYIIQVTLLSINFILNFLIIRVTMFSKNNDFRENSFFIIYAADLIMGMYMSLSEILVGRLFIYVTLLCPILAPYFFTPSIFLKIFFTLSHYSQGFKTVSQVFLSFNRMTCVVFPVGYSAIWKRILTPIIIVLFVLPIGIIWNVLISRVYANPSFGGFSVNYIKLVSWASLSKLHLTYFIVSLILIIVISGVTLYALLILKHRIKSAEQTLTIATMVLSLEFSFLSVIQIYFAFFSSSTSEWRPFLLRVMYFTYDLLNFSTTIIFISCNPKLRKMLLKRMQSSVTVGRSTSNSTIPVRIIPALIH</sequence>
<dbReference type="EMBL" id="Z46343">
    <property type="protein sequence ID" value="CAA86460.1"/>
    <property type="molecule type" value="Genomic_DNA"/>
</dbReference>
<dbReference type="PIR" id="T25180">
    <property type="entry name" value="T25180"/>
</dbReference>
<dbReference type="RefSeq" id="NP_497953.1">
    <property type="nucleotide sequence ID" value="NM_065552.3"/>
</dbReference>
<dbReference type="SMR" id="P46567"/>
<dbReference type="FunCoup" id="P46567">
    <property type="interactions" value="1"/>
</dbReference>
<dbReference type="STRING" id="6239.T23F11.5.1"/>
<dbReference type="PaxDb" id="6239-T23F11.5"/>
<dbReference type="EnsemblMetazoa" id="T23F11.5.1">
    <property type="protein sequence ID" value="T23F11.5.1"/>
    <property type="gene ID" value="WBGene00005170"/>
</dbReference>
<dbReference type="GeneID" id="191839"/>
<dbReference type="KEGG" id="cel:CELE_T23F11.5"/>
<dbReference type="UCSC" id="T23F11.5">
    <property type="organism name" value="c. elegans"/>
</dbReference>
<dbReference type="AGR" id="WB:WBGene00005170"/>
<dbReference type="CTD" id="191839"/>
<dbReference type="WormBase" id="T23F11.5">
    <property type="protein sequence ID" value="CE02356"/>
    <property type="gene ID" value="WBGene00005170"/>
    <property type="gene designation" value="srg-13"/>
</dbReference>
<dbReference type="eggNOG" id="ENOG502TJCP">
    <property type="taxonomic scope" value="Eukaryota"/>
</dbReference>
<dbReference type="GeneTree" id="ENSGT00970000195841"/>
<dbReference type="HOGENOM" id="CLU_061253_1_0_1"/>
<dbReference type="InParanoid" id="P46567"/>
<dbReference type="OMA" id="SHEVIWK"/>
<dbReference type="OrthoDB" id="5781692at2759"/>
<dbReference type="PhylomeDB" id="P46567"/>
<dbReference type="PRO" id="PR:P46567"/>
<dbReference type="Proteomes" id="UP000001940">
    <property type="component" value="Chromosome III"/>
</dbReference>
<dbReference type="GO" id="GO:0016020">
    <property type="term" value="C:membrane"/>
    <property type="evidence" value="ECO:0007669"/>
    <property type="project" value="UniProtKB-SubCell"/>
</dbReference>
<dbReference type="GO" id="GO:0004888">
    <property type="term" value="F:transmembrane signaling receptor activity"/>
    <property type="evidence" value="ECO:0007669"/>
    <property type="project" value="InterPro"/>
</dbReference>
<dbReference type="GO" id="GO:0007606">
    <property type="term" value="P:sensory perception of chemical stimulus"/>
    <property type="evidence" value="ECO:0007669"/>
    <property type="project" value="InterPro"/>
</dbReference>
<dbReference type="Gene3D" id="1.20.1070.10">
    <property type="entry name" value="Rhodopsin 7-helix transmembrane proteins"/>
    <property type="match status" value="1"/>
</dbReference>
<dbReference type="InterPro" id="IPR000609">
    <property type="entry name" value="7TM_GPCR_serpentine_rcpt_Srg"/>
</dbReference>
<dbReference type="InterPro" id="IPR051119">
    <property type="entry name" value="Nematode_SR-like"/>
</dbReference>
<dbReference type="PANTHER" id="PTHR31627">
    <property type="entry name" value="SERPENTINE RECEPTOR CLASS GAMMA-RELATED"/>
    <property type="match status" value="1"/>
</dbReference>
<dbReference type="PANTHER" id="PTHR31627:SF3">
    <property type="entry name" value="SERPENTINE RECEPTOR CLASS GAMMA-RELATED"/>
    <property type="match status" value="1"/>
</dbReference>
<dbReference type="Pfam" id="PF02118">
    <property type="entry name" value="Srg"/>
    <property type="match status" value="1"/>
</dbReference>
<dbReference type="PRINTS" id="PR00698">
    <property type="entry name" value="TMPROTEINSRG"/>
</dbReference>
<dbReference type="SUPFAM" id="SSF81321">
    <property type="entry name" value="Family A G protein-coupled receptor-like"/>
    <property type="match status" value="1"/>
</dbReference>
<protein>
    <recommendedName>
        <fullName>Serpentine receptor class gamma-13</fullName>
        <shortName>Protein srg-13</shortName>
    </recommendedName>
</protein>
<reference key="1">
    <citation type="journal article" date="1998" name="Science">
        <title>Genome sequence of the nematode C. elegans: a platform for investigating biology.</title>
        <authorList>
            <consortium name="The C. elegans sequencing consortium"/>
        </authorList>
    </citation>
    <scope>NUCLEOTIDE SEQUENCE [LARGE SCALE GENOMIC DNA]</scope>
    <source>
        <strain>Bristol N2</strain>
    </source>
</reference>
<gene>
    <name type="primary">srg-13</name>
    <name type="ORF">T23F11.5</name>
</gene>
<keyword id="KW-0472">Membrane</keyword>
<keyword id="KW-1185">Reference proteome</keyword>
<keyword id="KW-0812">Transmembrane</keyword>
<keyword id="KW-1133">Transmembrane helix</keyword>
<proteinExistence type="inferred from homology"/>
<evidence type="ECO:0000255" key="1"/>
<evidence type="ECO:0000305" key="2"/>
<organism>
    <name type="scientific">Caenorhabditis elegans</name>
    <dbReference type="NCBI Taxonomy" id="6239"/>
    <lineage>
        <taxon>Eukaryota</taxon>
        <taxon>Metazoa</taxon>
        <taxon>Ecdysozoa</taxon>
        <taxon>Nematoda</taxon>
        <taxon>Chromadorea</taxon>
        <taxon>Rhabditida</taxon>
        <taxon>Rhabditina</taxon>
        <taxon>Rhabditomorpha</taxon>
        <taxon>Rhabditoidea</taxon>
        <taxon>Rhabditidae</taxon>
        <taxon>Peloderinae</taxon>
        <taxon>Caenorhabditis</taxon>
    </lineage>
</organism>
<feature type="chain" id="PRO_0000104562" description="Serpentine receptor class gamma-13">
    <location>
        <begin position="1"/>
        <end position="336"/>
    </location>
</feature>
<feature type="transmembrane region" description="Helical" evidence="1">
    <location>
        <begin position="32"/>
        <end position="52"/>
    </location>
</feature>
<feature type="transmembrane region" description="Helical" evidence="1">
    <location>
        <begin position="68"/>
        <end position="88"/>
    </location>
</feature>
<feature type="transmembrane region" description="Helical" evidence="1">
    <location>
        <begin position="93"/>
        <end position="113"/>
    </location>
</feature>
<feature type="transmembrane region" description="Helical" evidence="1">
    <location>
        <begin position="133"/>
        <end position="153"/>
    </location>
</feature>
<feature type="transmembrane region" description="Helical" evidence="1">
    <location>
        <begin position="156"/>
        <end position="176"/>
    </location>
</feature>
<feature type="transmembrane region" description="Helical" evidence="1">
    <location>
        <begin position="210"/>
        <end position="230"/>
    </location>
</feature>
<feature type="transmembrane region" description="Helical" evidence="1">
    <location>
        <begin position="246"/>
        <end position="266"/>
    </location>
</feature>
<feature type="transmembrane region" description="Helical" evidence="1">
    <location>
        <begin position="277"/>
        <end position="297"/>
    </location>
</feature>